<accession>P34987</accession>
<dbReference type="EMBL" id="D12820">
    <property type="protein sequence ID" value="BAA02252.1"/>
    <property type="molecule type" value="mRNA"/>
</dbReference>
<dbReference type="PIR" id="A46750">
    <property type="entry name" value="A46750"/>
</dbReference>
<dbReference type="RefSeq" id="NP_001094492.1">
    <property type="nucleotide sequence ID" value="NM_001101022.1"/>
</dbReference>
<dbReference type="SMR" id="P34987"/>
<dbReference type="FunCoup" id="P34987">
    <property type="interactions" value="1004"/>
</dbReference>
<dbReference type="GlyCosmos" id="P34987">
    <property type="glycosylation" value="1 site, No reported glycans"/>
</dbReference>
<dbReference type="GlyGen" id="P34987">
    <property type="glycosylation" value="1 site"/>
</dbReference>
<dbReference type="UCSC" id="RGD:1334163">
    <property type="organism name" value="rat"/>
</dbReference>
<dbReference type="AGR" id="RGD:1332661"/>
<dbReference type="RGD" id="1334163">
    <property type="gene designation" value="Olr1172"/>
</dbReference>
<dbReference type="InParanoid" id="P34987"/>
<dbReference type="PRO" id="PR:P34987"/>
<dbReference type="Proteomes" id="UP000002494">
    <property type="component" value="Unplaced"/>
</dbReference>
<dbReference type="GO" id="GO:0005886">
    <property type="term" value="C:plasma membrane"/>
    <property type="evidence" value="ECO:0000318"/>
    <property type="project" value="GO_Central"/>
</dbReference>
<dbReference type="GO" id="GO:0004930">
    <property type="term" value="F:G protein-coupled receptor activity"/>
    <property type="evidence" value="ECO:0007669"/>
    <property type="project" value="UniProtKB-KW"/>
</dbReference>
<dbReference type="GO" id="GO:0004984">
    <property type="term" value="F:olfactory receptor activity"/>
    <property type="evidence" value="ECO:0000318"/>
    <property type="project" value="GO_Central"/>
</dbReference>
<dbReference type="GO" id="GO:0007165">
    <property type="term" value="P:signal transduction"/>
    <property type="evidence" value="ECO:0000318"/>
    <property type="project" value="GO_Central"/>
</dbReference>
<dbReference type="CDD" id="cd15234">
    <property type="entry name" value="7tmA_OR7-like"/>
    <property type="match status" value="1"/>
</dbReference>
<dbReference type="FunFam" id="1.20.1070.10:FF:000009">
    <property type="entry name" value="Olfactory receptor"/>
    <property type="match status" value="1"/>
</dbReference>
<dbReference type="Gene3D" id="1.20.1070.10">
    <property type="entry name" value="Rhodopsin 7-helix transmembrane proteins"/>
    <property type="match status" value="1"/>
</dbReference>
<dbReference type="InterPro" id="IPR000276">
    <property type="entry name" value="GPCR_Rhodpsn"/>
</dbReference>
<dbReference type="InterPro" id="IPR017452">
    <property type="entry name" value="GPCR_Rhodpsn_7TM"/>
</dbReference>
<dbReference type="InterPro" id="IPR000725">
    <property type="entry name" value="Olfact_rcpt"/>
</dbReference>
<dbReference type="PANTHER" id="PTHR48001">
    <property type="entry name" value="OLFACTORY RECEPTOR"/>
    <property type="match status" value="1"/>
</dbReference>
<dbReference type="Pfam" id="PF00001">
    <property type="entry name" value="7tm_1"/>
    <property type="match status" value="1"/>
</dbReference>
<dbReference type="PRINTS" id="PR00237">
    <property type="entry name" value="GPCRRHODOPSN"/>
</dbReference>
<dbReference type="PRINTS" id="PR00245">
    <property type="entry name" value="OLFACTORYR"/>
</dbReference>
<dbReference type="SUPFAM" id="SSF81321">
    <property type="entry name" value="Family A G protein-coupled receptor-like"/>
    <property type="match status" value="1"/>
</dbReference>
<dbReference type="PROSITE" id="PS00237">
    <property type="entry name" value="G_PROTEIN_RECEP_F1_1"/>
    <property type="match status" value="1"/>
</dbReference>
<dbReference type="PROSITE" id="PS50262">
    <property type="entry name" value="G_PROTEIN_RECEP_F1_2"/>
    <property type="match status" value="1"/>
</dbReference>
<sequence>MILNCNPFSGLFLSMYLVTVLGNLLIILAVSSNSHLHNLMYFFLSNLSFVDICFISTTIPKMLVNIHSQTKDISYIECLSQVYFLTTFGGMDNFLLTLMACDRYVAICHPLNYTVIMNLQLCALLILMFWLIMFCVSLIHVLLMNELNFSRGTEIPHFFCELAQVLKVANSDTHINNVFMYVVTSLLGLIPMTGILMSYSQIASSLLKMSSSVSKYKAFSTCGSHLCVVSLFYGSATIVYFCSSVLHSTHKKMIASLMYTVISPMLNPFIYSLRNKDVKGALGKLFIRVASCPLWSKDFRPKFILKPERQSL</sequence>
<keyword id="KW-1003">Cell membrane</keyword>
<keyword id="KW-1015">Disulfide bond</keyword>
<keyword id="KW-0297">G-protein coupled receptor</keyword>
<keyword id="KW-0325">Glycoprotein</keyword>
<keyword id="KW-0472">Membrane</keyword>
<keyword id="KW-0552">Olfaction</keyword>
<keyword id="KW-0675">Receptor</keyword>
<keyword id="KW-1185">Reference proteome</keyword>
<keyword id="KW-0716">Sensory transduction</keyword>
<keyword id="KW-0807">Transducer</keyword>
<keyword id="KW-0812">Transmembrane</keyword>
<keyword id="KW-1133">Transmembrane helix</keyword>
<protein>
    <recommendedName>
        <fullName>Olfactory receptor 867</fullName>
    </recommendedName>
    <alternativeName>
        <fullName>Gustatory receptor GUST27</fullName>
    </alternativeName>
    <alternativeName>
        <fullName>Olfactory receptor 1172</fullName>
    </alternativeName>
</protein>
<gene>
    <name type="primary">Olr867</name>
    <name type="synonym">Olr1172</name>
</gene>
<organism>
    <name type="scientific">Rattus norvegicus</name>
    <name type="common">Rat</name>
    <dbReference type="NCBI Taxonomy" id="10116"/>
    <lineage>
        <taxon>Eukaryota</taxon>
        <taxon>Metazoa</taxon>
        <taxon>Chordata</taxon>
        <taxon>Craniata</taxon>
        <taxon>Vertebrata</taxon>
        <taxon>Euteleostomi</taxon>
        <taxon>Mammalia</taxon>
        <taxon>Eutheria</taxon>
        <taxon>Euarchontoglires</taxon>
        <taxon>Glires</taxon>
        <taxon>Rodentia</taxon>
        <taxon>Myomorpha</taxon>
        <taxon>Muroidea</taxon>
        <taxon>Muridae</taxon>
        <taxon>Murinae</taxon>
        <taxon>Rattus</taxon>
    </lineage>
</organism>
<reference key="1">
    <citation type="journal article" date="1993" name="J. Biol. Chem.">
        <title>Primary structure and cell-type specific expression of a gustatory G protein-coupled receptor related to olfactory receptors.</title>
        <authorList>
            <person name="Abe K."/>
            <person name="Kusakabe Y."/>
            <person name="Tanemura K."/>
            <person name="Emori Y."/>
            <person name="Arai S."/>
        </authorList>
    </citation>
    <scope>NUCLEOTIDE SEQUENCE [MRNA]</scope>
    <scope>TISSUE SPECIFICITY</scope>
    <source>
        <tissue>Tongue</tissue>
    </source>
</reference>
<feature type="chain" id="PRO_0000069667" description="Olfactory receptor 867">
    <location>
        <begin position="1"/>
        <end position="312"/>
    </location>
</feature>
<feature type="topological domain" description="Extracellular" evidence="1">
    <location>
        <begin position="1"/>
        <end position="6"/>
    </location>
</feature>
<feature type="transmembrane region" description="Helical; Name=1" evidence="1">
    <location>
        <begin position="7"/>
        <end position="30"/>
    </location>
</feature>
<feature type="topological domain" description="Cytoplasmic" evidence="1">
    <location>
        <begin position="31"/>
        <end position="38"/>
    </location>
</feature>
<feature type="transmembrane region" description="Helical; Name=2" evidence="1">
    <location>
        <begin position="39"/>
        <end position="60"/>
    </location>
</feature>
<feature type="topological domain" description="Extracellular" evidence="1">
    <location>
        <begin position="61"/>
        <end position="81"/>
    </location>
</feature>
<feature type="transmembrane region" description="Helical; Name=3" evidence="1">
    <location>
        <begin position="82"/>
        <end position="101"/>
    </location>
</feature>
<feature type="topological domain" description="Cytoplasmic" evidence="1">
    <location>
        <begin position="102"/>
        <end position="120"/>
    </location>
</feature>
<feature type="transmembrane region" description="Helical; Name=4" evidence="1">
    <location>
        <begin position="121"/>
        <end position="139"/>
    </location>
</feature>
<feature type="topological domain" description="Extracellular" evidence="1">
    <location>
        <begin position="140"/>
        <end position="177"/>
    </location>
</feature>
<feature type="transmembrane region" description="Helical; Name=5" evidence="1">
    <location>
        <begin position="178"/>
        <end position="200"/>
    </location>
</feature>
<feature type="topological domain" description="Cytoplasmic" evidence="1">
    <location>
        <begin position="201"/>
        <end position="217"/>
    </location>
</feature>
<feature type="transmembrane region" description="Helical; Name=6" evidence="1">
    <location>
        <begin position="218"/>
        <end position="241"/>
    </location>
</feature>
<feature type="topological domain" description="Extracellular" evidence="1">
    <location>
        <begin position="242"/>
        <end position="253"/>
    </location>
</feature>
<feature type="transmembrane region" description="Helical; Name=7" evidence="1">
    <location>
        <begin position="254"/>
        <end position="273"/>
    </location>
</feature>
<feature type="topological domain" description="Cytoplasmic" evidence="1">
    <location>
        <begin position="274"/>
        <end position="312"/>
    </location>
</feature>
<feature type="glycosylation site" description="N-linked (GlcNAc...) asparagine" evidence="1">
    <location>
        <position position="148"/>
    </location>
</feature>
<feature type="disulfide bond" evidence="2">
    <location>
        <begin position="78"/>
        <end position="160"/>
    </location>
</feature>
<evidence type="ECO:0000255" key="1"/>
<evidence type="ECO:0000255" key="2">
    <source>
        <dbReference type="PROSITE-ProRule" id="PRU00521"/>
    </source>
</evidence>
<evidence type="ECO:0000269" key="3">
    <source>
    </source>
</evidence>
<comment type="function">
    <text>Possible olfactory or taste receptor.</text>
</comment>
<comment type="subcellular location">
    <subcellularLocation>
        <location>Cell membrane</location>
        <topology>Multi-pass membrane protein</topology>
    </subcellularLocation>
</comment>
<comment type="tissue specificity">
    <text evidence="3">Epithelium of the tongue; including the taste buds.</text>
</comment>
<comment type="similarity">
    <text evidence="2">Belongs to the G-protein coupled receptor 1 family.</text>
</comment>
<name>OL867_RAT</name>
<proteinExistence type="evidence at transcript level"/>